<sequence length="198" mass="22488">MKLYSLSVLYKGDNKVSLLKSAYDVSSFSFFQRSSIQEFMAFTSQLIVERSDKGSRSSVKEQEYLCHVYVRNDSLAGVVIADNEYPPRVCFTLLEKVLEEFSTQVDRIDWPSGSPATIQYNALDSYLSKYQNPRDADPMSKVQAELDETKIILHNTMESLLQRGEKLDDLVSKSEVLGTQSKAFYKTARKQNSCCGIM</sequence>
<organism>
    <name type="scientific">Xenopus tropicalis</name>
    <name type="common">Western clawed frog</name>
    <name type="synonym">Silurana tropicalis</name>
    <dbReference type="NCBI Taxonomy" id="8364"/>
    <lineage>
        <taxon>Eukaryota</taxon>
        <taxon>Metazoa</taxon>
        <taxon>Chordata</taxon>
        <taxon>Craniata</taxon>
        <taxon>Vertebrata</taxon>
        <taxon>Euteleostomi</taxon>
        <taxon>Amphibia</taxon>
        <taxon>Batrachia</taxon>
        <taxon>Anura</taxon>
        <taxon>Pipoidea</taxon>
        <taxon>Pipidae</taxon>
        <taxon>Xenopodinae</taxon>
        <taxon>Xenopus</taxon>
        <taxon>Silurana</taxon>
    </lineage>
</organism>
<name>YKT6_XENTR</name>
<accession>Q6P816</accession>
<proteinExistence type="evidence at transcript level"/>
<dbReference type="EC" id="2.3.1.-"/>
<dbReference type="EMBL" id="BC061415">
    <property type="protein sequence ID" value="AAH61415.1"/>
    <property type="molecule type" value="mRNA"/>
</dbReference>
<dbReference type="RefSeq" id="NP_989023.1">
    <property type="nucleotide sequence ID" value="NM_203692.1"/>
</dbReference>
<dbReference type="RefSeq" id="XP_012814209.1">
    <property type="nucleotide sequence ID" value="XM_012958755.3"/>
</dbReference>
<dbReference type="SMR" id="Q6P816"/>
<dbReference type="FunCoup" id="Q6P816">
    <property type="interactions" value="3604"/>
</dbReference>
<dbReference type="STRING" id="8364.ENSXETP00000050103"/>
<dbReference type="DNASU" id="394619"/>
<dbReference type="GeneID" id="394619"/>
<dbReference type="KEGG" id="xtr:394619"/>
<dbReference type="AGR" id="Xenbase:XB-GENE-949728"/>
<dbReference type="CTD" id="10652"/>
<dbReference type="Xenbase" id="XB-GENE-949728">
    <property type="gene designation" value="ykt6"/>
</dbReference>
<dbReference type="InParanoid" id="Q6P816"/>
<dbReference type="OMA" id="HYIGIIR"/>
<dbReference type="OrthoDB" id="27923at2759"/>
<dbReference type="Reactome" id="R-XTR-204005">
    <property type="pathway name" value="COPII-mediated vesicle transport"/>
</dbReference>
<dbReference type="Reactome" id="R-XTR-6807878">
    <property type="pathway name" value="COPI-mediated anterograde transport"/>
</dbReference>
<dbReference type="Reactome" id="R-XTR-8980692">
    <property type="pathway name" value="RHOA GTPase cycle"/>
</dbReference>
<dbReference type="Reactome" id="R-XTR-9013148">
    <property type="pathway name" value="CDC42 GTPase cycle"/>
</dbReference>
<dbReference type="Reactome" id="R-XTR-9013149">
    <property type="pathway name" value="RAC1 GTPase cycle"/>
</dbReference>
<dbReference type="Reactome" id="R-XTR-9013408">
    <property type="pathway name" value="RHOG GTPase cycle"/>
</dbReference>
<dbReference type="Reactome" id="R-XTR-9013423">
    <property type="pathway name" value="RAC3 GTPase cycle"/>
</dbReference>
<dbReference type="Proteomes" id="UP000008143">
    <property type="component" value="Chromosome 3"/>
</dbReference>
<dbReference type="Bgee" id="ENSXETG00000019002">
    <property type="expression patterns" value="Expressed in 2-cell stage embryo and 13 other cell types or tissues"/>
</dbReference>
<dbReference type="GO" id="GO:0030659">
    <property type="term" value="C:cytoplasmic vesicle membrane"/>
    <property type="evidence" value="ECO:0007669"/>
    <property type="project" value="UniProtKB-SubCell"/>
</dbReference>
<dbReference type="GO" id="GO:0005829">
    <property type="term" value="C:cytosol"/>
    <property type="evidence" value="ECO:0007669"/>
    <property type="project" value="UniProtKB-SubCell"/>
</dbReference>
<dbReference type="GO" id="GO:0000139">
    <property type="term" value="C:Golgi membrane"/>
    <property type="evidence" value="ECO:0007669"/>
    <property type="project" value="UniProtKB-SubCell"/>
</dbReference>
<dbReference type="GO" id="GO:0016740">
    <property type="term" value="F:transferase activity"/>
    <property type="evidence" value="ECO:0007669"/>
    <property type="project" value="UniProtKB-KW"/>
</dbReference>
<dbReference type="GO" id="GO:0015031">
    <property type="term" value="P:protein transport"/>
    <property type="evidence" value="ECO:0007669"/>
    <property type="project" value="UniProtKB-KW"/>
</dbReference>
<dbReference type="GO" id="GO:0016192">
    <property type="term" value="P:vesicle-mediated transport"/>
    <property type="evidence" value="ECO:0007669"/>
    <property type="project" value="UniProtKB-KW"/>
</dbReference>
<dbReference type="CDD" id="cd14824">
    <property type="entry name" value="Longin"/>
    <property type="match status" value="1"/>
</dbReference>
<dbReference type="CDD" id="cd15867">
    <property type="entry name" value="R-SNARE_YKT6"/>
    <property type="match status" value="1"/>
</dbReference>
<dbReference type="FunFam" id="3.30.450.50:FF:000013">
    <property type="entry name" value="Synaptobrevin homolog YKT6"/>
    <property type="match status" value="1"/>
</dbReference>
<dbReference type="FunFam" id="1.20.5.110:FF:000020">
    <property type="entry name" value="synaptobrevin homolog YKT6"/>
    <property type="match status" value="1"/>
</dbReference>
<dbReference type="Gene3D" id="1.20.5.110">
    <property type="match status" value="1"/>
</dbReference>
<dbReference type="Gene3D" id="3.30.450.50">
    <property type="entry name" value="Longin domain"/>
    <property type="match status" value="1"/>
</dbReference>
<dbReference type="InterPro" id="IPR011012">
    <property type="entry name" value="Longin-like_dom_sf"/>
</dbReference>
<dbReference type="InterPro" id="IPR010908">
    <property type="entry name" value="Longin_dom"/>
</dbReference>
<dbReference type="InterPro" id="IPR045848">
    <property type="entry name" value="R-SNARE_YKT6"/>
</dbReference>
<dbReference type="InterPro" id="IPR042855">
    <property type="entry name" value="V_SNARE_CC"/>
</dbReference>
<dbReference type="PANTHER" id="PTHR45806">
    <property type="entry name" value="SYNAPTOBREVIN HOMOLOG YKT6"/>
    <property type="match status" value="1"/>
</dbReference>
<dbReference type="PANTHER" id="PTHR45806:SF1">
    <property type="entry name" value="SYNAPTOBREVIN HOMOLOG YKT6"/>
    <property type="match status" value="1"/>
</dbReference>
<dbReference type="Pfam" id="PF13774">
    <property type="entry name" value="Longin"/>
    <property type="match status" value="1"/>
</dbReference>
<dbReference type="Pfam" id="PF00957">
    <property type="entry name" value="Synaptobrevin"/>
    <property type="match status" value="1"/>
</dbReference>
<dbReference type="SMART" id="SM01270">
    <property type="entry name" value="Longin"/>
    <property type="match status" value="1"/>
</dbReference>
<dbReference type="SUPFAM" id="SSF58038">
    <property type="entry name" value="SNARE fusion complex"/>
    <property type="match status" value="1"/>
</dbReference>
<dbReference type="SUPFAM" id="SSF64356">
    <property type="entry name" value="SNARE-like"/>
    <property type="match status" value="1"/>
</dbReference>
<dbReference type="PROSITE" id="PS50859">
    <property type="entry name" value="LONGIN"/>
    <property type="match status" value="1"/>
</dbReference>
<dbReference type="PROSITE" id="PS50892">
    <property type="entry name" value="V_SNARE"/>
    <property type="match status" value="1"/>
</dbReference>
<feature type="chain" id="PRO_0000280715" description="Synaptobrevin homolog YKT6">
    <location>
        <begin position="1"/>
        <end position="195"/>
    </location>
</feature>
<feature type="propeptide" id="PRO_0000396667" description="Removed in mature form" evidence="1">
    <location>
        <begin position="196"/>
        <end position="198"/>
    </location>
</feature>
<feature type="domain" description="Longin" evidence="3">
    <location>
        <begin position="8"/>
        <end position="127"/>
    </location>
</feature>
<feature type="domain" description="v-SNARE coiled-coil homology" evidence="4">
    <location>
        <begin position="138"/>
        <end position="198"/>
    </location>
</feature>
<feature type="modified residue" description="Cysteine methyl ester" evidence="1">
    <location>
        <position position="195"/>
    </location>
</feature>
<feature type="lipid moiety-binding region" description="S-palmitoyl cysteine" evidence="1">
    <location>
        <position position="194"/>
    </location>
</feature>
<feature type="lipid moiety-binding region" description="S-farnesyl cysteine" evidence="1">
    <location>
        <position position="195"/>
    </location>
</feature>
<reference key="1">
    <citation type="submission" date="2003-11" db="EMBL/GenBank/DDBJ databases">
        <authorList>
            <consortium name="NIH - Xenopus Gene Collection (XGC) project"/>
        </authorList>
    </citation>
    <scope>NUCLEOTIDE SEQUENCE [LARGE SCALE MRNA]</scope>
    <source>
        <tissue>Embryo</tissue>
    </source>
</reference>
<keyword id="KW-0175">Coiled coil</keyword>
<keyword id="KW-0963">Cytoplasm</keyword>
<keyword id="KW-0968">Cytoplasmic vesicle</keyword>
<keyword id="KW-0931">ER-Golgi transport</keyword>
<keyword id="KW-0333">Golgi apparatus</keyword>
<keyword id="KW-0449">Lipoprotein</keyword>
<keyword id="KW-0472">Membrane</keyword>
<keyword id="KW-0488">Methylation</keyword>
<keyword id="KW-0564">Palmitate</keyword>
<keyword id="KW-0636">Prenylation</keyword>
<keyword id="KW-0653">Protein transport</keyword>
<keyword id="KW-1185">Reference proteome</keyword>
<keyword id="KW-0808">Transferase</keyword>
<keyword id="KW-0813">Transport</keyword>
<gene>
    <name type="primary">ykt6</name>
</gene>
<protein>
    <recommendedName>
        <fullName>Synaptobrevin homolog YKT6</fullName>
        <ecNumber>2.3.1.-</ecNumber>
    </recommendedName>
</protein>
<evidence type="ECO:0000250" key="1"/>
<evidence type="ECO:0000250" key="2">
    <source>
        <dbReference type="UniProtKB" id="O15498"/>
    </source>
</evidence>
<evidence type="ECO:0000255" key="3">
    <source>
        <dbReference type="PROSITE-ProRule" id="PRU00231"/>
    </source>
</evidence>
<evidence type="ECO:0000255" key="4">
    <source>
        <dbReference type="PROSITE-ProRule" id="PRU00290"/>
    </source>
</evidence>
<evidence type="ECO:0000305" key="5"/>
<comment type="function">
    <text evidence="2">Vesicular soluble NSF attachment protein receptor (v-SNARE) mediating vesicle docking and fusion to a specific acceptor cellular compartment. Functions in endoplasmic reticulum to Golgi transport; as part of a SNARE complex composed of GOSR1, GOSR2 and STX5. Functions in early/recycling endosome to TGN transport; as part of a SNARE complex composed of BET1L, GOSR1 and STX5. Has a S-palmitoyl transferase activity.</text>
</comment>
<comment type="subcellular location">
    <subcellularLocation>
        <location evidence="1">Cytoplasm</location>
        <location evidence="1">Cytosol</location>
    </subcellularLocation>
    <subcellularLocation>
        <location evidence="1">Cytoplasmic vesicle membrane</location>
        <topology evidence="1">Lipid-anchor</topology>
        <orientation evidence="1">Cytoplasmic side</orientation>
    </subcellularLocation>
    <subcellularLocation>
        <location evidence="1">Golgi apparatus membrane</location>
        <topology evidence="1">Lipid-anchor</topology>
        <orientation evidence="1">Cytoplasmic side</orientation>
    </subcellularLocation>
    <text evidence="1">Probably cycles through vesicles between Golgi and endosomes.</text>
</comment>
<comment type="domain">
    <text evidence="1">The longin domain regulates palmitoylation and membrane targeting.</text>
</comment>
<comment type="PTM">
    <text evidence="2">Palmitoylated; catalyzes its own palmitoylation. Palmitoylation is required for Golgi targeting.</text>
</comment>
<comment type="PTM">
    <text evidence="2">Farnesylation is required for Golgi targeting.</text>
</comment>
<comment type="similarity">
    <text evidence="5">Belongs to the synaptobrevin family.</text>
</comment>